<name>COXZ_BRADU</name>
<dbReference type="EMBL" id="AJ242592">
    <property type="protein sequence ID" value="CAB56822.1"/>
    <property type="molecule type" value="Genomic_DNA"/>
</dbReference>
<dbReference type="EMBL" id="U33883">
    <property type="protein sequence ID" value="AAF78812.1"/>
    <property type="molecule type" value="Genomic_DNA"/>
</dbReference>
<dbReference type="EMBL" id="BA000040">
    <property type="protein sequence ID" value="BAC46439.1"/>
    <property type="molecule type" value="Genomic_DNA"/>
</dbReference>
<dbReference type="RefSeq" id="NP_767814.1">
    <property type="nucleotide sequence ID" value="NC_004463.1"/>
</dbReference>
<dbReference type="RefSeq" id="WP_011083993.1">
    <property type="nucleotide sequence ID" value="NC_004463.1"/>
</dbReference>
<dbReference type="SMR" id="P56939"/>
<dbReference type="STRING" id="224911.AAV28_02755"/>
<dbReference type="EnsemblBacteria" id="BAC46439">
    <property type="protein sequence ID" value="BAC46439"/>
    <property type="gene ID" value="BAC46439"/>
</dbReference>
<dbReference type="GeneID" id="46488449"/>
<dbReference type="KEGG" id="bja:blr1174"/>
<dbReference type="PATRIC" id="fig|224911.44.peg.577"/>
<dbReference type="eggNOG" id="COG3175">
    <property type="taxonomic scope" value="Bacteria"/>
</dbReference>
<dbReference type="HOGENOM" id="CLU_045000_5_0_5"/>
<dbReference type="InParanoid" id="P56939"/>
<dbReference type="OrthoDB" id="9804841at2"/>
<dbReference type="PhylomeDB" id="P56939"/>
<dbReference type="Proteomes" id="UP000002526">
    <property type="component" value="Chromosome"/>
</dbReference>
<dbReference type="GO" id="GO:0005886">
    <property type="term" value="C:plasma membrane"/>
    <property type="evidence" value="ECO:0007669"/>
    <property type="project" value="UniProtKB-SubCell"/>
</dbReference>
<dbReference type="GO" id="GO:0005507">
    <property type="term" value="F:copper ion binding"/>
    <property type="evidence" value="ECO:0007669"/>
    <property type="project" value="InterPro"/>
</dbReference>
<dbReference type="GO" id="GO:0008535">
    <property type="term" value="P:respiratory chain complex IV assembly"/>
    <property type="evidence" value="ECO:0007669"/>
    <property type="project" value="UniProtKB-UniRule"/>
</dbReference>
<dbReference type="FunFam" id="2.60.370.10:FF:000001">
    <property type="entry name" value="COX11 cytochrome c oxidase assembly homolog"/>
    <property type="match status" value="1"/>
</dbReference>
<dbReference type="Gene3D" id="2.60.370.10">
    <property type="entry name" value="Ctag/Cox11"/>
    <property type="match status" value="1"/>
</dbReference>
<dbReference type="HAMAP" id="MF_00155">
    <property type="entry name" value="CtaG"/>
    <property type="match status" value="1"/>
</dbReference>
<dbReference type="InterPro" id="IPR023471">
    <property type="entry name" value="CtaG/Cox11_dom_sf"/>
</dbReference>
<dbReference type="InterPro" id="IPR007533">
    <property type="entry name" value="Cyt_c_oxidase_assmbl_CtaG"/>
</dbReference>
<dbReference type="NCBIfam" id="NF003465">
    <property type="entry name" value="PRK05089.1"/>
    <property type="match status" value="1"/>
</dbReference>
<dbReference type="PANTHER" id="PTHR21320:SF3">
    <property type="entry name" value="CYTOCHROME C OXIDASE ASSEMBLY PROTEIN COX11, MITOCHONDRIAL-RELATED"/>
    <property type="match status" value="1"/>
</dbReference>
<dbReference type="PANTHER" id="PTHR21320">
    <property type="entry name" value="CYTOCHROME C OXIDASE ASSEMBLY PROTEIN COX11-RELATED"/>
    <property type="match status" value="1"/>
</dbReference>
<dbReference type="Pfam" id="PF04442">
    <property type="entry name" value="CtaG_Cox11"/>
    <property type="match status" value="1"/>
</dbReference>
<dbReference type="PIRSF" id="PIRSF005413">
    <property type="entry name" value="COX11"/>
    <property type="match status" value="1"/>
</dbReference>
<dbReference type="SUPFAM" id="SSF110111">
    <property type="entry name" value="Ctag/Cox11"/>
    <property type="match status" value="1"/>
</dbReference>
<reference key="1">
    <citation type="submission" date="1999-05" db="EMBL/GenBank/DDBJ databases">
        <title>Factors involved in biogenesis of active cytochrome aa3 encoded by the coxBAEFGC gene cluster from Bradyrhizobium japonicum.</title>
        <authorList>
            <person name="Rossmann R."/>
            <person name="Loferer H."/>
            <person name="Rossi P."/>
            <person name="Hennecke H."/>
        </authorList>
    </citation>
    <scope>NUCLEOTIDE SEQUENCE [GENOMIC DNA]</scope>
    <source>
        <strain>USDA 110spc4</strain>
    </source>
</reference>
<reference key="2">
    <citation type="submission" date="2000-06" db="EMBL/GenBank/DDBJ databases">
        <title>Extended sequencing of a DNA fragment of B.japonicum adjacent to the cox operon.</title>
        <authorList>
            <person name="Mueller P."/>
        </authorList>
    </citation>
    <scope>NUCLEOTIDE SEQUENCE [GENOMIC DNA]</scope>
    <source>
        <strain>USDA 110spc4</strain>
    </source>
</reference>
<reference key="3">
    <citation type="journal article" date="2002" name="DNA Res.">
        <title>Complete genomic sequence of nitrogen-fixing symbiotic bacterium Bradyrhizobium japonicum USDA110.</title>
        <authorList>
            <person name="Kaneko T."/>
            <person name="Nakamura Y."/>
            <person name="Sato S."/>
            <person name="Minamisawa K."/>
            <person name="Uchiumi T."/>
            <person name="Sasamoto S."/>
            <person name="Watanabe A."/>
            <person name="Idesawa K."/>
            <person name="Iriguchi M."/>
            <person name="Kawashima K."/>
            <person name="Kohara M."/>
            <person name="Matsumoto M."/>
            <person name="Shimpo S."/>
            <person name="Tsuruoka H."/>
            <person name="Wada T."/>
            <person name="Yamada M."/>
            <person name="Tabata S."/>
        </authorList>
    </citation>
    <scope>NUCLEOTIDE SEQUENCE [LARGE SCALE GENOMIC DNA]</scope>
    <source>
        <strain>JCM 10833 / BCRC 13528 / IAM 13628 / NBRC 14792 / USDA 110</strain>
    </source>
</reference>
<gene>
    <name type="primary">ctaG</name>
    <name type="synonym">coxG</name>
    <name type="ordered locus">blr1174</name>
</gene>
<accession>P56939</accession>
<accession>Q9RM96</accession>
<proteinExistence type="inferred from homology"/>
<sequence length="214" mass="23039">MDHEPTISRDQSRTARKGVGKGLGRDVLVASICGGVVALMVGASYAAVPFYNWFCRATGFNGTTQVATAAPATGPIARKIAVRFDSNVAPGLPWKFEPEQSEIEVNIGQVTTVFYTVTNQAARTTAGQAAYNVAPLTVGSYFQKINCFCFTEQTMAPGEKREMPVVFYVDPSIADDHENDGLSTITLSYTFYPVKDPVVKPLASGEGDKRKGNL</sequence>
<feature type="chain" id="PRO_0000206032" description="Cytochrome c oxidase assembly protein CtaG">
    <location>
        <begin position="1"/>
        <end position="214"/>
    </location>
</feature>
<feature type="topological domain" description="Cytoplasmic" evidence="2">
    <location>
        <begin position="1"/>
        <end position="26"/>
    </location>
</feature>
<feature type="transmembrane region" description="Helical; Signal-anchor for type II membrane protein" evidence="2">
    <location>
        <begin position="27"/>
        <end position="51"/>
    </location>
</feature>
<feature type="topological domain" description="Periplasmic" evidence="2">
    <location>
        <begin position="52"/>
        <end position="214"/>
    </location>
</feature>
<protein>
    <recommendedName>
        <fullName>Cytochrome c oxidase assembly protein CtaG</fullName>
    </recommendedName>
</protein>
<comment type="function">
    <text evidence="1">Exerts its effect at some terminal stage of cytochrome c oxidase synthesis, probably by being involved in the insertion of the copper B into subunit I.</text>
</comment>
<comment type="subcellular location">
    <subcellularLocation>
        <location evidence="3">Cell inner membrane</location>
        <topology evidence="3">Single-pass type II membrane protein</topology>
        <orientation evidence="3">Periplasmic side</orientation>
    </subcellularLocation>
</comment>
<comment type="similarity">
    <text evidence="3">Belongs to the COX11/CtaG family.</text>
</comment>
<keyword id="KW-0997">Cell inner membrane</keyword>
<keyword id="KW-1003">Cell membrane</keyword>
<keyword id="KW-0186">Copper</keyword>
<keyword id="KW-0472">Membrane</keyword>
<keyword id="KW-1185">Reference proteome</keyword>
<keyword id="KW-0735">Signal-anchor</keyword>
<keyword id="KW-0812">Transmembrane</keyword>
<keyword id="KW-1133">Transmembrane helix</keyword>
<evidence type="ECO:0000250" key="1"/>
<evidence type="ECO:0000255" key="2"/>
<evidence type="ECO:0000305" key="3"/>
<organism>
    <name type="scientific">Bradyrhizobium diazoefficiens (strain JCM 10833 / BCRC 13528 / IAM 13628 / NBRC 14792 / USDA 110)</name>
    <dbReference type="NCBI Taxonomy" id="224911"/>
    <lineage>
        <taxon>Bacteria</taxon>
        <taxon>Pseudomonadati</taxon>
        <taxon>Pseudomonadota</taxon>
        <taxon>Alphaproteobacteria</taxon>
        <taxon>Hyphomicrobiales</taxon>
        <taxon>Nitrobacteraceae</taxon>
        <taxon>Bradyrhizobium</taxon>
    </lineage>
</organism>